<keyword id="KW-0687">Ribonucleoprotein</keyword>
<keyword id="KW-0689">Ribosomal protein</keyword>
<gene>
    <name evidence="1" type="primary">rpmJ</name>
    <name type="ordered locus">FTN_0260</name>
</gene>
<dbReference type="EMBL" id="CP000439">
    <property type="protein sequence ID" value="ABK89169.1"/>
    <property type="molecule type" value="Genomic_DNA"/>
</dbReference>
<dbReference type="RefSeq" id="WP_003017816.1">
    <property type="nucleotide sequence ID" value="NZ_CP009633.1"/>
</dbReference>
<dbReference type="SMR" id="A0Q4K4"/>
<dbReference type="GeneID" id="93254575"/>
<dbReference type="KEGG" id="ftn:FTN_0260"/>
<dbReference type="KEGG" id="ftx:AW25_1782"/>
<dbReference type="BioCyc" id="FTUL401614:G1G75-271-MONOMER"/>
<dbReference type="Proteomes" id="UP000000762">
    <property type="component" value="Chromosome"/>
</dbReference>
<dbReference type="GO" id="GO:0005737">
    <property type="term" value="C:cytoplasm"/>
    <property type="evidence" value="ECO:0007669"/>
    <property type="project" value="UniProtKB-ARBA"/>
</dbReference>
<dbReference type="GO" id="GO:1990904">
    <property type="term" value="C:ribonucleoprotein complex"/>
    <property type="evidence" value="ECO:0007669"/>
    <property type="project" value="UniProtKB-KW"/>
</dbReference>
<dbReference type="GO" id="GO:0005840">
    <property type="term" value="C:ribosome"/>
    <property type="evidence" value="ECO:0007669"/>
    <property type="project" value="UniProtKB-KW"/>
</dbReference>
<dbReference type="GO" id="GO:0003735">
    <property type="term" value="F:structural constituent of ribosome"/>
    <property type="evidence" value="ECO:0007669"/>
    <property type="project" value="InterPro"/>
</dbReference>
<dbReference type="GO" id="GO:0006412">
    <property type="term" value="P:translation"/>
    <property type="evidence" value="ECO:0007669"/>
    <property type="project" value="UniProtKB-UniRule"/>
</dbReference>
<dbReference type="HAMAP" id="MF_00251">
    <property type="entry name" value="Ribosomal_bL36"/>
    <property type="match status" value="1"/>
</dbReference>
<dbReference type="InterPro" id="IPR000473">
    <property type="entry name" value="Ribosomal_bL36"/>
</dbReference>
<dbReference type="InterPro" id="IPR035977">
    <property type="entry name" value="Ribosomal_bL36_sp"/>
</dbReference>
<dbReference type="NCBIfam" id="TIGR01022">
    <property type="entry name" value="rpmJ_bact"/>
    <property type="match status" value="1"/>
</dbReference>
<dbReference type="PANTHER" id="PTHR42888">
    <property type="entry name" value="50S RIBOSOMAL PROTEIN L36, CHLOROPLASTIC"/>
    <property type="match status" value="1"/>
</dbReference>
<dbReference type="PANTHER" id="PTHR42888:SF1">
    <property type="entry name" value="LARGE RIBOSOMAL SUBUNIT PROTEIN BL36C"/>
    <property type="match status" value="1"/>
</dbReference>
<dbReference type="Pfam" id="PF00444">
    <property type="entry name" value="Ribosomal_L36"/>
    <property type="match status" value="1"/>
</dbReference>
<dbReference type="SUPFAM" id="SSF57840">
    <property type="entry name" value="Ribosomal protein L36"/>
    <property type="match status" value="1"/>
</dbReference>
<dbReference type="PROSITE" id="PS00828">
    <property type="entry name" value="RIBOSOMAL_L36"/>
    <property type="match status" value="1"/>
</dbReference>
<comment type="similarity">
    <text evidence="1">Belongs to the bacterial ribosomal protein bL36 family.</text>
</comment>
<reference key="1">
    <citation type="journal article" date="2007" name="Genome Biol.">
        <title>Comparison of Francisella tularensis genomes reveals evolutionary events associated with the emergence of human pathogenic strains.</title>
        <authorList>
            <person name="Rohmer L."/>
            <person name="Fong C."/>
            <person name="Abmayr S."/>
            <person name="Wasnick M."/>
            <person name="Larson Freeman T.J."/>
            <person name="Radey M."/>
            <person name="Guina T."/>
            <person name="Svensson K."/>
            <person name="Hayden H.S."/>
            <person name="Jacobs M."/>
            <person name="Gallagher L.A."/>
            <person name="Manoil C."/>
            <person name="Ernst R.K."/>
            <person name="Drees B."/>
            <person name="Buckley D."/>
            <person name="Haugen E."/>
            <person name="Bovee D."/>
            <person name="Zhou Y."/>
            <person name="Chang J."/>
            <person name="Levy R."/>
            <person name="Lim R."/>
            <person name="Gillett W."/>
            <person name="Guenthener D."/>
            <person name="Kang A."/>
            <person name="Shaffer S.A."/>
            <person name="Taylor G."/>
            <person name="Chen J."/>
            <person name="Gallis B."/>
            <person name="D'Argenio D.A."/>
            <person name="Forsman M."/>
            <person name="Olson M.V."/>
            <person name="Goodlett D.R."/>
            <person name="Kaul R."/>
            <person name="Miller S.I."/>
            <person name="Brittnacher M.J."/>
        </authorList>
    </citation>
    <scope>NUCLEOTIDE SEQUENCE [LARGE SCALE GENOMIC DNA]</scope>
    <source>
        <strain>U112</strain>
    </source>
</reference>
<proteinExistence type="inferred from homology"/>
<evidence type="ECO:0000255" key="1">
    <source>
        <dbReference type="HAMAP-Rule" id="MF_00251"/>
    </source>
</evidence>
<evidence type="ECO:0000305" key="2"/>
<name>RL36_FRATN</name>
<sequence>MKVRASVKKMCRNCKVIKRNRVVRVICTDPRHKQRQG</sequence>
<organism>
    <name type="scientific">Francisella tularensis subsp. novicida (strain U112)</name>
    <dbReference type="NCBI Taxonomy" id="401614"/>
    <lineage>
        <taxon>Bacteria</taxon>
        <taxon>Pseudomonadati</taxon>
        <taxon>Pseudomonadota</taxon>
        <taxon>Gammaproteobacteria</taxon>
        <taxon>Thiotrichales</taxon>
        <taxon>Francisellaceae</taxon>
        <taxon>Francisella</taxon>
    </lineage>
</organism>
<accession>A0Q4K4</accession>
<protein>
    <recommendedName>
        <fullName evidence="1">Large ribosomal subunit protein bL36</fullName>
    </recommendedName>
    <alternativeName>
        <fullName evidence="2">50S ribosomal protein L36</fullName>
    </alternativeName>
</protein>
<feature type="chain" id="PRO_0000302204" description="Large ribosomal subunit protein bL36">
    <location>
        <begin position="1"/>
        <end position="37"/>
    </location>
</feature>